<evidence type="ECO:0000255" key="1"/>
<evidence type="ECO:0000303" key="2">
    <source>
    </source>
</evidence>
<evidence type="ECO:0000305" key="3"/>
<evidence type="ECO:0000312" key="4">
    <source>
        <dbReference type="Araport" id="AT1G15180"/>
    </source>
</evidence>
<evidence type="ECO:0000312" key="5">
    <source>
        <dbReference type="EMBL" id="AAD39646.1"/>
    </source>
</evidence>
<comment type="subcellular location">
    <subcellularLocation>
        <location evidence="1">Membrane</location>
        <topology evidence="1">Multi-pass membrane protein</topology>
    </subcellularLocation>
</comment>
<comment type="alternative products">
    <event type="alternative splicing"/>
    <isoform>
        <id>Q94AL1-1</id>
        <name>1</name>
        <sequence type="displayed"/>
    </isoform>
    <text>A number of isoforms are produced. According to EST sequences.</text>
</comment>
<comment type="similarity">
    <text evidence="3">Belongs to the multi antimicrobial extrusion (MATE) (TC 2.A.66.1) family.</text>
</comment>
<comment type="sequence caution" evidence="3">
    <conflict type="erroneous gene model prediction">
        <sequence resource="EMBL-CDS" id="AAD39646"/>
    </conflict>
</comment>
<organism>
    <name type="scientific">Arabidopsis thaliana</name>
    <name type="common">Mouse-ear cress</name>
    <dbReference type="NCBI Taxonomy" id="3702"/>
    <lineage>
        <taxon>Eukaryota</taxon>
        <taxon>Viridiplantae</taxon>
        <taxon>Streptophyta</taxon>
        <taxon>Embryophyta</taxon>
        <taxon>Tracheophyta</taxon>
        <taxon>Spermatophyta</taxon>
        <taxon>Magnoliopsida</taxon>
        <taxon>eudicotyledons</taxon>
        <taxon>Gunneridae</taxon>
        <taxon>Pentapetalae</taxon>
        <taxon>rosids</taxon>
        <taxon>malvids</taxon>
        <taxon>Brassicales</taxon>
        <taxon>Brassicaceae</taxon>
        <taxon>Camelineae</taxon>
        <taxon>Arabidopsis</taxon>
    </lineage>
</organism>
<name>DTX13_ARATH</name>
<sequence>MGDAESTSKTSLLLPVERVENVTWRDLRDGLFTAELKRLICFAAPMAAVVIAQFMLQIISMVMVGHLGNLSLASASLASSFCNVTGFSFIVGLSCALDTLSGQAYGAKLYRKVGVQTYTAMFCLALVCLPLTLIWLNMETLLVFLGQDPSIAHEAGRYAACLIPGLFAYAVLQPLTRYFQNQSMITPLLITSCFVFCLHVPLCWLLVYKSGLGNLGGALALSFSNCLYTIILGSLMCFSSACSETRAPLSMEIFDGIGEFFRYALPSAAMICLEWWSYELIILLSGLLPNPQLETSVLSVCLQTTATVYSIHLAIAAAASTRISNELGAGNSRAANIVVYAAMSLAVVEILILSTSLLVGRNVFGHVFSSDKETIDYVAKMAPLVSISLILDGLQGVLSGIARGCGWQHIGAYINLGAFYLWGIPIAASLAFWIHLKGVGLWIGIQAGAVLQTLLLTLVTGCTNWESQADKARNRMALAYGT</sequence>
<reference key="1">
    <citation type="journal article" date="2000" name="Nature">
        <title>Sequence and analysis of chromosome 1 of the plant Arabidopsis thaliana.</title>
        <authorList>
            <person name="Theologis A."/>
            <person name="Ecker J.R."/>
            <person name="Palm C.J."/>
            <person name="Federspiel N.A."/>
            <person name="Kaul S."/>
            <person name="White O."/>
            <person name="Alonso J."/>
            <person name="Altafi H."/>
            <person name="Araujo R."/>
            <person name="Bowman C.L."/>
            <person name="Brooks S.Y."/>
            <person name="Buehler E."/>
            <person name="Chan A."/>
            <person name="Chao Q."/>
            <person name="Chen H."/>
            <person name="Cheuk R.F."/>
            <person name="Chin C.W."/>
            <person name="Chung M.K."/>
            <person name="Conn L."/>
            <person name="Conway A.B."/>
            <person name="Conway A.R."/>
            <person name="Creasy T.H."/>
            <person name="Dewar K."/>
            <person name="Dunn P."/>
            <person name="Etgu P."/>
            <person name="Feldblyum T.V."/>
            <person name="Feng J.-D."/>
            <person name="Fong B."/>
            <person name="Fujii C.Y."/>
            <person name="Gill J.E."/>
            <person name="Goldsmith A.D."/>
            <person name="Haas B."/>
            <person name="Hansen N.F."/>
            <person name="Hughes B."/>
            <person name="Huizar L."/>
            <person name="Hunter J.L."/>
            <person name="Jenkins J."/>
            <person name="Johnson-Hopson C."/>
            <person name="Khan S."/>
            <person name="Khaykin E."/>
            <person name="Kim C.J."/>
            <person name="Koo H.L."/>
            <person name="Kremenetskaia I."/>
            <person name="Kurtz D.B."/>
            <person name="Kwan A."/>
            <person name="Lam B."/>
            <person name="Langin-Hooper S."/>
            <person name="Lee A."/>
            <person name="Lee J.M."/>
            <person name="Lenz C.A."/>
            <person name="Li J.H."/>
            <person name="Li Y.-P."/>
            <person name="Lin X."/>
            <person name="Liu S.X."/>
            <person name="Liu Z.A."/>
            <person name="Luros J.S."/>
            <person name="Maiti R."/>
            <person name="Marziali A."/>
            <person name="Militscher J."/>
            <person name="Miranda M."/>
            <person name="Nguyen M."/>
            <person name="Nierman W.C."/>
            <person name="Osborne B.I."/>
            <person name="Pai G."/>
            <person name="Peterson J."/>
            <person name="Pham P.K."/>
            <person name="Rizzo M."/>
            <person name="Rooney T."/>
            <person name="Rowley D."/>
            <person name="Sakano H."/>
            <person name="Salzberg S.L."/>
            <person name="Schwartz J.R."/>
            <person name="Shinn P."/>
            <person name="Southwick A.M."/>
            <person name="Sun H."/>
            <person name="Tallon L.J."/>
            <person name="Tambunga G."/>
            <person name="Toriumi M.J."/>
            <person name="Town C.D."/>
            <person name="Utterback T."/>
            <person name="Van Aken S."/>
            <person name="Vaysberg M."/>
            <person name="Vysotskaia V.S."/>
            <person name="Walker M."/>
            <person name="Wu D."/>
            <person name="Yu G."/>
            <person name="Fraser C.M."/>
            <person name="Venter J.C."/>
            <person name="Davis R.W."/>
        </authorList>
    </citation>
    <scope>NUCLEOTIDE SEQUENCE [LARGE SCALE GENOMIC DNA]</scope>
    <source>
        <strain>cv. Columbia</strain>
    </source>
</reference>
<reference key="2">
    <citation type="journal article" date="2017" name="Plant J.">
        <title>Araport11: a complete reannotation of the Arabidopsis thaliana reference genome.</title>
        <authorList>
            <person name="Cheng C.Y."/>
            <person name="Krishnakumar V."/>
            <person name="Chan A.P."/>
            <person name="Thibaud-Nissen F."/>
            <person name="Schobel S."/>
            <person name="Town C.D."/>
        </authorList>
    </citation>
    <scope>GENOME REANNOTATION</scope>
    <source>
        <strain>cv. Columbia</strain>
    </source>
</reference>
<reference key="3">
    <citation type="journal article" date="2003" name="Science">
        <title>Empirical analysis of transcriptional activity in the Arabidopsis genome.</title>
        <authorList>
            <person name="Yamada K."/>
            <person name="Lim J."/>
            <person name="Dale J.M."/>
            <person name="Chen H."/>
            <person name="Shinn P."/>
            <person name="Palm C.J."/>
            <person name="Southwick A.M."/>
            <person name="Wu H.C."/>
            <person name="Kim C.J."/>
            <person name="Nguyen M."/>
            <person name="Pham P.K."/>
            <person name="Cheuk R.F."/>
            <person name="Karlin-Newmann G."/>
            <person name="Liu S.X."/>
            <person name="Lam B."/>
            <person name="Sakano H."/>
            <person name="Wu T."/>
            <person name="Yu G."/>
            <person name="Miranda M."/>
            <person name="Quach H.L."/>
            <person name="Tripp M."/>
            <person name="Chang C.H."/>
            <person name="Lee J.M."/>
            <person name="Toriumi M.J."/>
            <person name="Chan M.M."/>
            <person name="Tang C.C."/>
            <person name="Onodera C.S."/>
            <person name="Deng J.M."/>
            <person name="Akiyama K."/>
            <person name="Ansari Y."/>
            <person name="Arakawa T."/>
            <person name="Banh J."/>
            <person name="Banno F."/>
            <person name="Bowser L."/>
            <person name="Brooks S.Y."/>
            <person name="Carninci P."/>
            <person name="Chao Q."/>
            <person name="Choy N."/>
            <person name="Enju A."/>
            <person name="Goldsmith A.D."/>
            <person name="Gurjal M."/>
            <person name="Hansen N.F."/>
            <person name="Hayashizaki Y."/>
            <person name="Johnson-Hopson C."/>
            <person name="Hsuan V.W."/>
            <person name="Iida K."/>
            <person name="Karnes M."/>
            <person name="Khan S."/>
            <person name="Koesema E."/>
            <person name="Ishida J."/>
            <person name="Jiang P.X."/>
            <person name="Jones T."/>
            <person name="Kawai J."/>
            <person name="Kamiya A."/>
            <person name="Meyers C."/>
            <person name="Nakajima M."/>
            <person name="Narusaka M."/>
            <person name="Seki M."/>
            <person name="Sakurai T."/>
            <person name="Satou M."/>
            <person name="Tamse R."/>
            <person name="Vaysberg M."/>
            <person name="Wallender E.K."/>
            <person name="Wong C."/>
            <person name="Yamamura Y."/>
            <person name="Yuan S."/>
            <person name="Shinozaki K."/>
            <person name="Davis R.W."/>
            <person name="Theologis A."/>
            <person name="Ecker J.R."/>
        </authorList>
    </citation>
    <scope>NUCLEOTIDE SEQUENCE [LARGE SCALE MRNA]</scope>
    <source>
        <strain>cv. Columbia</strain>
    </source>
</reference>
<reference key="4">
    <citation type="journal article" date="2002" name="J. Biol. Chem.">
        <title>Functional cloning and characterization of a plant efflux carrier for multidrug and heavy metal detoxification.</title>
        <authorList>
            <person name="Li L."/>
            <person name="He Z."/>
            <person name="Pandey G.K."/>
            <person name="Tsuchiya T."/>
            <person name="Luan S."/>
        </authorList>
    </citation>
    <scope>GENE FAMILY</scope>
    <scope>NOMENCLATURE</scope>
</reference>
<reference key="5">
    <citation type="journal article" date="2003" name="Eur. J. Biochem.">
        <title>The multidrug/oligosaccharidyl-lipid/polysaccharide (MOP) exporter superfamily.</title>
        <authorList>
            <person name="Hvorup R.N."/>
            <person name="Winnen B."/>
            <person name="Chang A.B."/>
            <person name="Jiang Y."/>
            <person name="Zhou X.F."/>
            <person name="Saier M.H. Jr."/>
        </authorList>
    </citation>
    <scope>GENE FAMILY</scope>
</reference>
<protein>
    <recommendedName>
        <fullName evidence="2">Protein DETOXIFICATION 13</fullName>
        <shortName evidence="2">AtDTX13</shortName>
    </recommendedName>
    <alternativeName>
        <fullName evidence="3">Multidrug and toxic compound extrusion protein 13</fullName>
        <shortName evidence="3">MATE protein 13</shortName>
    </alternativeName>
</protein>
<accession>Q94AL1</accession>
<accession>Q9XI51</accession>
<proteinExistence type="evidence at transcript level"/>
<dbReference type="EMBL" id="AC007591">
    <property type="protein sequence ID" value="AAD39646.1"/>
    <property type="status" value="ALT_SEQ"/>
    <property type="molecule type" value="Genomic_DNA"/>
</dbReference>
<dbReference type="EMBL" id="CP002684">
    <property type="protein sequence ID" value="AEE29278.1"/>
    <property type="molecule type" value="Genomic_DNA"/>
</dbReference>
<dbReference type="EMBL" id="AY045957">
    <property type="protein sequence ID" value="AAK76631.1"/>
    <property type="molecule type" value="mRNA"/>
</dbReference>
<dbReference type="EMBL" id="AY079305">
    <property type="protein sequence ID" value="AAL85036.1"/>
    <property type="molecule type" value="mRNA"/>
</dbReference>
<dbReference type="PIR" id="G86285">
    <property type="entry name" value="G86285"/>
</dbReference>
<dbReference type="RefSeq" id="NP_563964.1">
    <molecule id="Q94AL1-1"/>
    <property type="nucleotide sequence ID" value="NM_101386.4"/>
</dbReference>
<dbReference type="SMR" id="Q94AL1"/>
<dbReference type="FunCoup" id="Q94AL1">
    <property type="interactions" value="558"/>
</dbReference>
<dbReference type="STRING" id="3702.Q94AL1"/>
<dbReference type="PaxDb" id="3702-AT1G15180.1"/>
<dbReference type="ProteomicsDB" id="221930">
    <molecule id="Q94AL1-1"/>
</dbReference>
<dbReference type="EnsemblPlants" id="AT1G15180.1">
    <molecule id="Q94AL1-1"/>
    <property type="protein sequence ID" value="AT1G15180.1"/>
    <property type="gene ID" value="AT1G15180"/>
</dbReference>
<dbReference type="GeneID" id="838084"/>
<dbReference type="Gramene" id="AT1G15180.1">
    <molecule id="Q94AL1-1"/>
    <property type="protein sequence ID" value="AT1G15180.1"/>
    <property type="gene ID" value="AT1G15180"/>
</dbReference>
<dbReference type="KEGG" id="ath:AT1G15180"/>
<dbReference type="Araport" id="AT1G15180"/>
<dbReference type="TAIR" id="AT1G15180"/>
<dbReference type="eggNOG" id="KOG1347">
    <property type="taxonomic scope" value="Eukaryota"/>
</dbReference>
<dbReference type="HOGENOM" id="CLU_012893_1_0_1"/>
<dbReference type="InParanoid" id="Q94AL1"/>
<dbReference type="OMA" id="ILWLYMG"/>
<dbReference type="OrthoDB" id="2126698at2759"/>
<dbReference type="PhylomeDB" id="Q94AL1"/>
<dbReference type="PRO" id="PR:Q94AL1"/>
<dbReference type="Proteomes" id="UP000006548">
    <property type="component" value="Chromosome 1"/>
</dbReference>
<dbReference type="ExpressionAtlas" id="Q94AL1">
    <property type="expression patterns" value="baseline and differential"/>
</dbReference>
<dbReference type="GO" id="GO:0016020">
    <property type="term" value="C:membrane"/>
    <property type="evidence" value="ECO:0007669"/>
    <property type="project" value="UniProtKB-SubCell"/>
</dbReference>
<dbReference type="GO" id="GO:0015297">
    <property type="term" value="F:antiporter activity"/>
    <property type="evidence" value="ECO:0007669"/>
    <property type="project" value="InterPro"/>
</dbReference>
<dbReference type="GO" id="GO:0042910">
    <property type="term" value="F:xenobiotic transmembrane transporter activity"/>
    <property type="evidence" value="ECO:0007669"/>
    <property type="project" value="InterPro"/>
</dbReference>
<dbReference type="GO" id="GO:1990961">
    <property type="term" value="P:xenobiotic detoxification by transmembrane export across the plasma membrane"/>
    <property type="evidence" value="ECO:0007669"/>
    <property type="project" value="InterPro"/>
</dbReference>
<dbReference type="CDD" id="cd13132">
    <property type="entry name" value="MATE_eukaryotic"/>
    <property type="match status" value="1"/>
</dbReference>
<dbReference type="InterPro" id="IPR045069">
    <property type="entry name" value="MATE_euk"/>
</dbReference>
<dbReference type="InterPro" id="IPR002528">
    <property type="entry name" value="MATE_fam"/>
</dbReference>
<dbReference type="NCBIfam" id="TIGR00797">
    <property type="entry name" value="matE"/>
    <property type="match status" value="1"/>
</dbReference>
<dbReference type="PANTHER" id="PTHR11206">
    <property type="entry name" value="MULTIDRUG RESISTANCE PROTEIN"/>
    <property type="match status" value="1"/>
</dbReference>
<dbReference type="Pfam" id="PF01554">
    <property type="entry name" value="MatE"/>
    <property type="match status" value="2"/>
</dbReference>
<feature type="chain" id="PRO_0000434056" description="Protein DETOXIFICATION 13">
    <location>
        <begin position="1"/>
        <end position="482"/>
    </location>
</feature>
<feature type="transmembrane region" description="Helical" evidence="1">
    <location>
        <begin position="39"/>
        <end position="59"/>
    </location>
</feature>
<feature type="transmembrane region" description="Helical" evidence="1">
    <location>
        <begin position="77"/>
        <end position="97"/>
    </location>
</feature>
<feature type="transmembrane region" description="Helical" evidence="1">
    <location>
        <begin position="124"/>
        <end position="144"/>
    </location>
</feature>
<feature type="transmembrane region" description="Helical" evidence="1">
    <location>
        <begin position="159"/>
        <end position="179"/>
    </location>
</feature>
<feature type="transmembrane region" description="Helical" evidence="1">
    <location>
        <begin position="188"/>
        <end position="208"/>
    </location>
</feature>
<feature type="transmembrane region" description="Helical" evidence="1">
    <location>
        <begin position="218"/>
        <end position="238"/>
    </location>
</feature>
<feature type="transmembrane region" description="Helical" evidence="1">
    <location>
        <begin position="268"/>
        <end position="288"/>
    </location>
</feature>
<feature type="transmembrane region" description="Helical" evidence="1">
    <location>
        <begin position="297"/>
        <end position="317"/>
    </location>
</feature>
<feature type="transmembrane region" description="Helical" evidence="1">
    <location>
        <begin position="337"/>
        <end position="357"/>
    </location>
</feature>
<feature type="transmembrane region" description="Helical" evidence="1">
    <location>
        <begin position="381"/>
        <end position="401"/>
    </location>
</feature>
<feature type="transmembrane region" description="Helical" evidence="1">
    <location>
        <begin position="416"/>
        <end position="436"/>
    </location>
</feature>
<feature type="transmembrane region" description="Helical" evidence="1">
    <location>
        <begin position="439"/>
        <end position="459"/>
    </location>
</feature>
<gene>
    <name evidence="2" type="primary">DTX13</name>
    <name evidence="4" type="ordered locus">At1g15180</name>
    <name evidence="5" type="ORF">F9L1.12</name>
</gene>
<keyword id="KW-0025">Alternative splicing</keyword>
<keyword id="KW-0472">Membrane</keyword>
<keyword id="KW-1185">Reference proteome</keyword>
<keyword id="KW-0812">Transmembrane</keyword>
<keyword id="KW-1133">Transmembrane helix</keyword>
<keyword id="KW-0813">Transport</keyword>